<evidence type="ECO:0000255" key="1">
    <source>
        <dbReference type="HAMAP-Rule" id="MF_00081"/>
    </source>
</evidence>
<sequence>MLDPRARTLLKTLIERYIADGQPVGSRTLSRYSGLELSPATIRNVMSDLEELGLVSSPHTSAGRVPTPRGYRLFVDTMLTVEAPIDAEAVARQVQNTLQAGEPQQRVVAAAASVLSNLSQFAGVVLTPRRSHVFKQIEFMRLSDKRILLIIVTPEGDVQNRMLATPRDYSPSQLTEASNYINAHFAGLSFDEVRRRLRDEIDQLRGDMTTLMHAAVTASTEVPDTEDTVLISGERNLLEVADLSSDMARLRKLFDVFDQKTGLLQLLDVSSHAQGVQIFIGGESTLVPIEEMSVVTAPYEVNGQIVGTLGVIGPTRMAYNRVIPIVDITARLLSLTLSQQ</sequence>
<accession>Q1BYY0</accession>
<proteinExistence type="inferred from homology"/>
<comment type="function">
    <text evidence="1">Negative regulator of class I heat shock genes (grpE-dnaK-dnaJ and groELS operons). Prevents heat-shock induction of these operons.</text>
</comment>
<comment type="similarity">
    <text evidence="1">Belongs to the HrcA family.</text>
</comment>
<gene>
    <name evidence="1" type="primary">hrcA</name>
    <name type="ordered locus">Bcen_0261</name>
</gene>
<name>HRCA_BURO1</name>
<protein>
    <recommendedName>
        <fullName evidence="1">Heat-inducible transcription repressor HrcA</fullName>
    </recommendedName>
</protein>
<organism>
    <name type="scientific">Burkholderia orbicola (strain AU 1054)</name>
    <dbReference type="NCBI Taxonomy" id="331271"/>
    <lineage>
        <taxon>Bacteria</taxon>
        <taxon>Pseudomonadati</taxon>
        <taxon>Pseudomonadota</taxon>
        <taxon>Betaproteobacteria</taxon>
        <taxon>Burkholderiales</taxon>
        <taxon>Burkholderiaceae</taxon>
        <taxon>Burkholderia</taxon>
        <taxon>Burkholderia cepacia complex</taxon>
        <taxon>Burkholderia orbicola</taxon>
    </lineage>
</organism>
<reference key="1">
    <citation type="submission" date="2006-05" db="EMBL/GenBank/DDBJ databases">
        <title>Complete sequence of chromosome 1 of Burkholderia cenocepacia AU 1054.</title>
        <authorList>
            <consortium name="US DOE Joint Genome Institute"/>
            <person name="Copeland A."/>
            <person name="Lucas S."/>
            <person name="Lapidus A."/>
            <person name="Barry K."/>
            <person name="Detter J.C."/>
            <person name="Glavina del Rio T."/>
            <person name="Hammon N."/>
            <person name="Israni S."/>
            <person name="Dalin E."/>
            <person name="Tice H."/>
            <person name="Pitluck S."/>
            <person name="Chain P."/>
            <person name="Malfatti S."/>
            <person name="Shin M."/>
            <person name="Vergez L."/>
            <person name="Schmutz J."/>
            <person name="Larimer F."/>
            <person name="Land M."/>
            <person name="Hauser L."/>
            <person name="Kyrpides N."/>
            <person name="Lykidis A."/>
            <person name="LiPuma J.J."/>
            <person name="Konstantinidis K."/>
            <person name="Tiedje J.M."/>
            <person name="Richardson P."/>
        </authorList>
    </citation>
    <scope>NUCLEOTIDE SEQUENCE [LARGE SCALE GENOMIC DNA]</scope>
    <source>
        <strain>AU 1054</strain>
    </source>
</reference>
<feature type="chain" id="PRO_1000010382" description="Heat-inducible transcription repressor HrcA">
    <location>
        <begin position="1"/>
        <end position="340"/>
    </location>
</feature>
<keyword id="KW-0678">Repressor</keyword>
<keyword id="KW-0346">Stress response</keyword>
<keyword id="KW-0804">Transcription</keyword>
<keyword id="KW-0805">Transcription regulation</keyword>
<dbReference type="EMBL" id="CP000378">
    <property type="protein sequence ID" value="ABF75175.1"/>
    <property type="molecule type" value="Genomic_DNA"/>
</dbReference>
<dbReference type="SMR" id="Q1BYY0"/>
<dbReference type="HOGENOM" id="CLU_050019_0_0_4"/>
<dbReference type="GO" id="GO:0003677">
    <property type="term" value="F:DNA binding"/>
    <property type="evidence" value="ECO:0007669"/>
    <property type="project" value="InterPro"/>
</dbReference>
<dbReference type="GO" id="GO:0045892">
    <property type="term" value="P:negative regulation of DNA-templated transcription"/>
    <property type="evidence" value="ECO:0007669"/>
    <property type="project" value="UniProtKB-UniRule"/>
</dbReference>
<dbReference type="Gene3D" id="3.30.450.40">
    <property type="match status" value="1"/>
</dbReference>
<dbReference type="Gene3D" id="3.30.390.60">
    <property type="entry name" value="Heat-inducible transcription repressor hrca homolog, domain 3"/>
    <property type="match status" value="1"/>
</dbReference>
<dbReference type="Gene3D" id="1.10.10.10">
    <property type="entry name" value="Winged helix-like DNA-binding domain superfamily/Winged helix DNA-binding domain"/>
    <property type="match status" value="1"/>
</dbReference>
<dbReference type="HAMAP" id="MF_00081">
    <property type="entry name" value="HrcA"/>
    <property type="match status" value="1"/>
</dbReference>
<dbReference type="InterPro" id="IPR029016">
    <property type="entry name" value="GAF-like_dom_sf"/>
</dbReference>
<dbReference type="InterPro" id="IPR002571">
    <property type="entry name" value="HrcA"/>
</dbReference>
<dbReference type="InterPro" id="IPR021153">
    <property type="entry name" value="HrcA_C"/>
</dbReference>
<dbReference type="InterPro" id="IPR036388">
    <property type="entry name" value="WH-like_DNA-bd_sf"/>
</dbReference>
<dbReference type="InterPro" id="IPR036390">
    <property type="entry name" value="WH_DNA-bd_sf"/>
</dbReference>
<dbReference type="InterPro" id="IPR005104">
    <property type="entry name" value="WHTH_HrcA_DNA-bd"/>
</dbReference>
<dbReference type="InterPro" id="IPR023120">
    <property type="entry name" value="WHTH_transcript_rep_HrcA_IDD"/>
</dbReference>
<dbReference type="NCBIfam" id="TIGR00331">
    <property type="entry name" value="hrcA"/>
    <property type="match status" value="1"/>
</dbReference>
<dbReference type="PANTHER" id="PTHR34824">
    <property type="entry name" value="HEAT-INDUCIBLE TRANSCRIPTION REPRESSOR HRCA"/>
    <property type="match status" value="1"/>
</dbReference>
<dbReference type="PANTHER" id="PTHR34824:SF1">
    <property type="entry name" value="HEAT-INDUCIBLE TRANSCRIPTION REPRESSOR HRCA"/>
    <property type="match status" value="1"/>
</dbReference>
<dbReference type="Pfam" id="PF01628">
    <property type="entry name" value="HrcA"/>
    <property type="match status" value="1"/>
</dbReference>
<dbReference type="Pfam" id="PF03444">
    <property type="entry name" value="HrcA_DNA-bdg"/>
    <property type="match status" value="1"/>
</dbReference>
<dbReference type="PIRSF" id="PIRSF005485">
    <property type="entry name" value="HrcA"/>
    <property type="match status" value="1"/>
</dbReference>
<dbReference type="SUPFAM" id="SSF55781">
    <property type="entry name" value="GAF domain-like"/>
    <property type="match status" value="1"/>
</dbReference>
<dbReference type="SUPFAM" id="SSF46785">
    <property type="entry name" value="Winged helix' DNA-binding domain"/>
    <property type="match status" value="1"/>
</dbReference>